<organism>
    <name type="scientific">Enterobacter sp. (strain 638)</name>
    <dbReference type="NCBI Taxonomy" id="399742"/>
    <lineage>
        <taxon>Bacteria</taxon>
        <taxon>Pseudomonadati</taxon>
        <taxon>Pseudomonadota</taxon>
        <taxon>Gammaproteobacteria</taxon>
        <taxon>Enterobacterales</taxon>
        <taxon>Enterobacteriaceae</taxon>
        <taxon>Enterobacter</taxon>
    </lineage>
</organism>
<protein>
    <recommendedName>
        <fullName evidence="1">UPF0213 protein Ent638_3592</fullName>
    </recommendedName>
</protein>
<dbReference type="EMBL" id="CP000653">
    <property type="protein sequence ID" value="ABP62250.1"/>
    <property type="status" value="ALT_INIT"/>
    <property type="molecule type" value="Genomic_DNA"/>
</dbReference>
<dbReference type="SMR" id="A4WEX0"/>
<dbReference type="STRING" id="399742.Ent638_3592"/>
<dbReference type="KEGG" id="ent:Ent638_3592"/>
<dbReference type="eggNOG" id="COG2827">
    <property type="taxonomic scope" value="Bacteria"/>
</dbReference>
<dbReference type="HOGENOM" id="CLU_135650_0_1_6"/>
<dbReference type="Proteomes" id="UP000000230">
    <property type="component" value="Chromosome"/>
</dbReference>
<dbReference type="CDD" id="cd10456">
    <property type="entry name" value="GIY-YIG_UPF0213"/>
    <property type="match status" value="1"/>
</dbReference>
<dbReference type="Gene3D" id="3.40.1440.10">
    <property type="entry name" value="GIY-YIG endonuclease"/>
    <property type="match status" value="1"/>
</dbReference>
<dbReference type="HAMAP" id="MF_01029">
    <property type="entry name" value="UPF0213"/>
    <property type="match status" value="1"/>
</dbReference>
<dbReference type="InterPro" id="IPR000305">
    <property type="entry name" value="GIY-YIG_endonuc"/>
</dbReference>
<dbReference type="InterPro" id="IPR035901">
    <property type="entry name" value="GIY-YIG_endonuc_sf"/>
</dbReference>
<dbReference type="InterPro" id="IPR050190">
    <property type="entry name" value="UPF0213_domain"/>
</dbReference>
<dbReference type="InterPro" id="IPR022992">
    <property type="entry name" value="UPF0213_GIY-YIG_endonuc"/>
</dbReference>
<dbReference type="PANTHER" id="PTHR34477">
    <property type="entry name" value="UPF0213 PROTEIN YHBQ"/>
    <property type="match status" value="1"/>
</dbReference>
<dbReference type="PANTHER" id="PTHR34477:SF1">
    <property type="entry name" value="UPF0213 PROTEIN YHBQ"/>
    <property type="match status" value="1"/>
</dbReference>
<dbReference type="Pfam" id="PF01541">
    <property type="entry name" value="GIY-YIG"/>
    <property type="match status" value="1"/>
</dbReference>
<dbReference type="SUPFAM" id="SSF82771">
    <property type="entry name" value="GIY-YIG endonuclease"/>
    <property type="match status" value="1"/>
</dbReference>
<dbReference type="PROSITE" id="PS50164">
    <property type="entry name" value="GIY_YIG"/>
    <property type="match status" value="1"/>
</dbReference>
<accession>A4WEX0</accession>
<evidence type="ECO:0000255" key="1">
    <source>
        <dbReference type="HAMAP-Rule" id="MF_01029"/>
    </source>
</evidence>
<evidence type="ECO:0000305" key="2"/>
<sequence length="102" mass="11464">MLTVCWFLYLVRTADNALYTGITTDVGRRFLEHQTGKGAKALRGKGELSLAFSAPVGERSLALKMEYRIKQLTKRQKERLVAGDGSFEALYESLQTPPVKRD</sequence>
<name>Y3592_ENT38</name>
<reference key="1">
    <citation type="journal article" date="2010" name="PLoS Genet.">
        <title>Genome sequence of the plant growth promoting endophytic bacterium Enterobacter sp. 638.</title>
        <authorList>
            <person name="Taghavi S."/>
            <person name="van der Lelie D."/>
            <person name="Hoffman A."/>
            <person name="Zhang Y.B."/>
            <person name="Walla M.D."/>
            <person name="Vangronsveld J."/>
            <person name="Newman L."/>
            <person name="Monchy S."/>
        </authorList>
    </citation>
    <scope>NUCLEOTIDE SEQUENCE [LARGE SCALE GENOMIC DNA]</scope>
    <source>
        <strain>638</strain>
    </source>
</reference>
<proteinExistence type="inferred from homology"/>
<feature type="chain" id="PRO_0000328908" description="UPF0213 protein Ent638_3592">
    <location>
        <begin position="1"/>
        <end position="102"/>
    </location>
</feature>
<feature type="domain" description="GIY-YIG" evidence="1">
    <location>
        <begin position="4"/>
        <end position="79"/>
    </location>
</feature>
<comment type="similarity">
    <text evidence="1">Belongs to the UPF0213 family.</text>
</comment>
<comment type="sequence caution" evidence="2">
    <conflict type="erroneous initiation">
        <sequence resource="EMBL-CDS" id="ABP62250"/>
    </conflict>
</comment>
<gene>
    <name type="ordered locus">Ent638_3592</name>
</gene>